<name>G6PI_FRACC</name>
<gene>
    <name evidence="1" type="primary">pgi</name>
    <name type="ordered locus">Francci3_0045</name>
</gene>
<accession>Q2JH03</accession>
<feature type="chain" id="PRO_0000252622" description="Glucose-6-phosphate isomerase">
    <location>
        <begin position="1"/>
        <end position="556"/>
    </location>
</feature>
<feature type="active site" description="Proton donor" evidence="1">
    <location>
        <position position="363"/>
    </location>
</feature>
<feature type="active site" evidence="1">
    <location>
        <position position="394"/>
    </location>
</feature>
<feature type="active site" evidence="1">
    <location>
        <position position="522"/>
    </location>
</feature>
<organism>
    <name type="scientific">Frankia casuarinae (strain DSM 45818 / CECT 9043 / HFP020203 / CcI3)</name>
    <dbReference type="NCBI Taxonomy" id="106370"/>
    <lineage>
        <taxon>Bacteria</taxon>
        <taxon>Bacillati</taxon>
        <taxon>Actinomycetota</taxon>
        <taxon>Actinomycetes</taxon>
        <taxon>Frankiales</taxon>
        <taxon>Frankiaceae</taxon>
        <taxon>Frankia</taxon>
    </lineage>
</organism>
<protein>
    <recommendedName>
        <fullName evidence="1">Glucose-6-phosphate isomerase</fullName>
        <shortName evidence="1">GPI</shortName>
        <ecNumber evidence="1">5.3.1.9</ecNumber>
    </recommendedName>
    <alternativeName>
        <fullName evidence="1">Phosphoglucose isomerase</fullName>
        <shortName evidence="1">PGI</shortName>
    </alternativeName>
    <alternativeName>
        <fullName evidence="1">Phosphohexose isomerase</fullName>
        <shortName evidence="1">PHI</shortName>
    </alternativeName>
</protein>
<proteinExistence type="inferred from homology"/>
<sequence>MSTTEPAAPVAPLDITATEEWAALTTHLREISEVSLRDLFAADPRRGETFAAEADGLYLDYSKNRLTARTVELLTALARRAGLADRIEAMFRGERINVTENRPVLHVALRAPAGTRIEVDGVDVVPDVHRVLDAMSQFADRVRSGDWLGATGERIRTVVNIGIGGSDLGPAMAYDALRDYADRSIEVRFVSNVDPTDIWEATADLDPASTLFIVSSKTFTTLETISNARAARSWLTGLLGEDAVSRHFVAVSTNAEKVAEFGIDTVNMFEFWDWVGGRYSVDCAIGLSLMIAIGPPNFREFLAGFAAMDTHFRTAPFERNLPVLLGLIGLWYRDFFGTATHAVLPYSHYLGRFPAYLQQLDMESNGKSVDLTGRPVSTPTGPIVWGTPGTNGQHAYYQLLHQGTTIVPADFIGFVRPNHPGVGTADGAGVDQHALLLANFLAQTEALAFGRTAAEVAAEGVTPDLVAHRTFPGNRPSNTLLAQKLTPFALGQLIALYEHKVFTQGVIWGINSFDQWGVELGKVLAGRIIPELGSEQEPELGHDSSTNALIKRLRAG</sequence>
<reference key="1">
    <citation type="journal article" date="2007" name="Genome Res.">
        <title>Genome characteristics of facultatively symbiotic Frankia sp. strains reflect host range and host plant biogeography.</title>
        <authorList>
            <person name="Normand P."/>
            <person name="Lapierre P."/>
            <person name="Tisa L.S."/>
            <person name="Gogarten J.P."/>
            <person name="Alloisio N."/>
            <person name="Bagnarol E."/>
            <person name="Bassi C.A."/>
            <person name="Berry A.M."/>
            <person name="Bickhart D.M."/>
            <person name="Choisne N."/>
            <person name="Couloux A."/>
            <person name="Cournoyer B."/>
            <person name="Cruveiller S."/>
            <person name="Daubin V."/>
            <person name="Demange N."/>
            <person name="Francino M.P."/>
            <person name="Goltsman E."/>
            <person name="Huang Y."/>
            <person name="Kopp O.R."/>
            <person name="Labarre L."/>
            <person name="Lapidus A."/>
            <person name="Lavire C."/>
            <person name="Marechal J."/>
            <person name="Martinez M."/>
            <person name="Mastronunzio J.E."/>
            <person name="Mullin B.C."/>
            <person name="Niemann J."/>
            <person name="Pujic P."/>
            <person name="Rawnsley T."/>
            <person name="Rouy Z."/>
            <person name="Schenowitz C."/>
            <person name="Sellstedt A."/>
            <person name="Tavares F."/>
            <person name="Tomkins J.P."/>
            <person name="Vallenet D."/>
            <person name="Valverde C."/>
            <person name="Wall L.G."/>
            <person name="Wang Y."/>
            <person name="Medigue C."/>
            <person name="Benson D.R."/>
        </authorList>
    </citation>
    <scope>NUCLEOTIDE SEQUENCE [LARGE SCALE GENOMIC DNA]</scope>
    <source>
        <strain>DSM 45818 / CECT 9043 / HFP020203 / CcI3</strain>
    </source>
</reference>
<comment type="function">
    <text evidence="1">Catalyzes the reversible isomerization of glucose-6-phosphate to fructose-6-phosphate.</text>
</comment>
<comment type="catalytic activity">
    <reaction evidence="1">
        <text>alpha-D-glucose 6-phosphate = beta-D-fructose 6-phosphate</text>
        <dbReference type="Rhea" id="RHEA:11816"/>
        <dbReference type="ChEBI" id="CHEBI:57634"/>
        <dbReference type="ChEBI" id="CHEBI:58225"/>
        <dbReference type="EC" id="5.3.1.9"/>
    </reaction>
</comment>
<comment type="pathway">
    <text evidence="1">Carbohydrate biosynthesis; gluconeogenesis.</text>
</comment>
<comment type="pathway">
    <text evidence="1">Carbohydrate degradation; glycolysis; D-glyceraldehyde 3-phosphate and glycerone phosphate from D-glucose: step 2/4.</text>
</comment>
<comment type="subcellular location">
    <subcellularLocation>
        <location evidence="1">Cytoplasm</location>
    </subcellularLocation>
</comment>
<comment type="similarity">
    <text evidence="1">Belongs to the GPI family.</text>
</comment>
<evidence type="ECO:0000255" key="1">
    <source>
        <dbReference type="HAMAP-Rule" id="MF_00473"/>
    </source>
</evidence>
<dbReference type="EC" id="5.3.1.9" evidence="1"/>
<dbReference type="EMBL" id="CP000249">
    <property type="protein sequence ID" value="ABD09439.1"/>
    <property type="molecule type" value="Genomic_DNA"/>
</dbReference>
<dbReference type="RefSeq" id="WP_011434521.1">
    <property type="nucleotide sequence ID" value="NZ_JENI01000001.1"/>
</dbReference>
<dbReference type="SMR" id="Q2JH03"/>
<dbReference type="STRING" id="106370.Francci3_0045"/>
<dbReference type="KEGG" id="fra:Francci3_0045"/>
<dbReference type="eggNOG" id="COG0166">
    <property type="taxonomic scope" value="Bacteria"/>
</dbReference>
<dbReference type="HOGENOM" id="CLU_017947_3_1_11"/>
<dbReference type="OrthoDB" id="140919at2"/>
<dbReference type="PhylomeDB" id="Q2JH03"/>
<dbReference type="UniPathway" id="UPA00109">
    <property type="reaction ID" value="UER00181"/>
</dbReference>
<dbReference type="UniPathway" id="UPA00138"/>
<dbReference type="Proteomes" id="UP000001937">
    <property type="component" value="Chromosome"/>
</dbReference>
<dbReference type="GO" id="GO:0005829">
    <property type="term" value="C:cytosol"/>
    <property type="evidence" value="ECO:0007669"/>
    <property type="project" value="TreeGrafter"/>
</dbReference>
<dbReference type="GO" id="GO:0097367">
    <property type="term" value="F:carbohydrate derivative binding"/>
    <property type="evidence" value="ECO:0007669"/>
    <property type="project" value="InterPro"/>
</dbReference>
<dbReference type="GO" id="GO:0004347">
    <property type="term" value="F:glucose-6-phosphate isomerase activity"/>
    <property type="evidence" value="ECO:0007669"/>
    <property type="project" value="UniProtKB-UniRule"/>
</dbReference>
<dbReference type="GO" id="GO:0048029">
    <property type="term" value="F:monosaccharide binding"/>
    <property type="evidence" value="ECO:0007669"/>
    <property type="project" value="TreeGrafter"/>
</dbReference>
<dbReference type="GO" id="GO:0006094">
    <property type="term" value="P:gluconeogenesis"/>
    <property type="evidence" value="ECO:0007669"/>
    <property type="project" value="UniProtKB-UniRule"/>
</dbReference>
<dbReference type="GO" id="GO:0051156">
    <property type="term" value="P:glucose 6-phosphate metabolic process"/>
    <property type="evidence" value="ECO:0007669"/>
    <property type="project" value="TreeGrafter"/>
</dbReference>
<dbReference type="GO" id="GO:0006096">
    <property type="term" value="P:glycolytic process"/>
    <property type="evidence" value="ECO:0007669"/>
    <property type="project" value="UniProtKB-UniRule"/>
</dbReference>
<dbReference type="CDD" id="cd05015">
    <property type="entry name" value="SIS_PGI_1"/>
    <property type="match status" value="1"/>
</dbReference>
<dbReference type="CDD" id="cd05016">
    <property type="entry name" value="SIS_PGI_2"/>
    <property type="match status" value="1"/>
</dbReference>
<dbReference type="FunFam" id="1.10.1390.10:FF:000001">
    <property type="entry name" value="Glucose-6-phosphate isomerase"/>
    <property type="match status" value="1"/>
</dbReference>
<dbReference type="FunFam" id="3.40.50.10490:FF:000018">
    <property type="entry name" value="Glucose-6-phosphate isomerase"/>
    <property type="match status" value="1"/>
</dbReference>
<dbReference type="Gene3D" id="1.10.1390.10">
    <property type="match status" value="1"/>
</dbReference>
<dbReference type="Gene3D" id="3.40.50.10490">
    <property type="entry name" value="Glucose-6-phosphate isomerase like protein, domain 1"/>
    <property type="match status" value="2"/>
</dbReference>
<dbReference type="HAMAP" id="MF_00473">
    <property type="entry name" value="G6P_isomerase"/>
    <property type="match status" value="1"/>
</dbReference>
<dbReference type="InterPro" id="IPR001672">
    <property type="entry name" value="G6P_Isomerase"/>
</dbReference>
<dbReference type="InterPro" id="IPR023096">
    <property type="entry name" value="G6P_Isomerase_C"/>
</dbReference>
<dbReference type="InterPro" id="IPR018189">
    <property type="entry name" value="Phosphoglucose_isomerase_CS"/>
</dbReference>
<dbReference type="InterPro" id="IPR046348">
    <property type="entry name" value="SIS_dom_sf"/>
</dbReference>
<dbReference type="InterPro" id="IPR035476">
    <property type="entry name" value="SIS_PGI_1"/>
</dbReference>
<dbReference type="InterPro" id="IPR035482">
    <property type="entry name" value="SIS_PGI_2"/>
</dbReference>
<dbReference type="NCBIfam" id="NF001211">
    <property type="entry name" value="PRK00179.1"/>
    <property type="match status" value="1"/>
</dbReference>
<dbReference type="PANTHER" id="PTHR11469">
    <property type="entry name" value="GLUCOSE-6-PHOSPHATE ISOMERASE"/>
    <property type="match status" value="1"/>
</dbReference>
<dbReference type="PANTHER" id="PTHR11469:SF1">
    <property type="entry name" value="GLUCOSE-6-PHOSPHATE ISOMERASE"/>
    <property type="match status" value="1"/>
</dbReference>
<dbReference type="Pfam" id="PF00342">
    <property type="entry name" value="PGI"/>
    <property type="match status" value="1"/>
</dbReference>
<dbReference type="PRINTS" id="PR00662">
    <property type="entry name" value="G6PISOMERASE"/>
</dbReference>
<dbReference type="SUPFAM" id="SSF53697">
    <property type="entry name" value="SIS domain"/>
    <property type="match status" value="1"/>
</dbReference>
<dbReference type="PROSITE" id="PS00174">
    <property type="entry name" value="P_GLUCOSE_ISOMERASE_2"/>
    <property type="match status" value="1"/>
</dbReference>
<dbReference type="PROSITE" id="PS51463">
    <property type="entry name" value="P_GLUCOSE_ISOMERASE_3"/>
    <property type="match status" value="1"/>
</dbReference>
<keyword id="KW-0963">Cytoplasm</keyword>
<keyword id="KW-0312">Gluconeogenesis</keyword>
<keyword id="KW-0324">Glycolysis</keyword>
<keyword id="KW-0413">Isomerase</keyword>
<keyword id="KW-1185">Reference proteome</keyword>